<accession>Q2IX94</accession>
<keyword id="KW-1185">Reference proteome</keyword>
<keyword id="KW-0687">Ribonucleoprotein</keyword>
<keyword id="KW-0689">Ribosomal protein</keyword>
<keyword id="KW-0694">RNA-binding</keyword>
<keyword id="KW-0699">rRNA-binding</keyword>
<reference key="1">
    <citation type="submission" date="2006-01" db="EMBL/GenBank/DDBJ databases">
        <title>Complete sequence of Rhodopseudomonas palustris HaA2.</title>
        <authorList>
            <consortium name="US DOE Joint Genome Institute"/>
            <person name="Copeland A."/>
            <person name="Lucas S."/>
            <person name="Lapidus A."/>
            <person name="Barry K."/>
            <person name="Detter J.C."/>
            <person name="Glavina T."/>
            <person name="Hammon N."/>
            <person name="Israni S."/>
            <person name="Pitluck S."/>
            <person name="Chain P."/>
            <person name="Malfatti S."/>
            <person name="Shin M."/>
            <person name="Vergez L."/>
            <person name="Schmutz J."/>
            <person name="Larimer F."/>
            <person name="Land M."/>
            <person name="Hauser L."/>
            <person name="Pelletier D.A."/>
            <person name="Kyrpides N."/>
            <person name="Anderson I."/>
            <person name="Oda Y."/>
            <person name="Harwood C.S."/>
            <person name="Richardson P."/>
        </authorList>
    </citation>
    <scope>NUCLEOTIDE SEQUENCE [LARGE SCALE GENOMIC DNA]</scope>
    <source>
        <strain>HaA2</strain>
    </source>
</reference>
<comment type="function">
    <text evidence="1">Binds to the 23S rRNA.</text>
</comment>
<comment type="similarity">
    <text evidence="1">Belongs to the bacterial ribosomal protein bL9 family.</text>
</comment>
<protein>
    <recommendedName>
        <fullName evidence="1">Large ribosomal subunit protein bL9</fullName>
    </recommendedName>
    <alternativeName>
        <fullName evidence="2">50S ribosomal protein L9</fullName>
    </alternativeName>
</protein>
<feature type="chain" id="PRO_0000258484" description="Large ribosomal subunit protein bL9">
    <location>
        <begin position="1"/>
        <end position="196"/>
    </location>
</feature>
<organism>
    <name type="scientific">Rhodopseudomonas palustris (strain HaA2)</name>
    <dbReference type="NCBI Taxonomy" id="316058"/>
    <lineage>
        <taxon>Bacteria</taxon>
        <taxon>Pseudomonadati</taxon>
        <taxon>Pseudomonadota</taxon>
        <taxon>Alphaproteobacteria</taxon>
        <taxon>Hyphomicrobiales</taxon>
        <taxon>Nitrobacteraceae</taxon>
        <taxon>Rhodopseudomonas</taxon>
    </lineage>
</organism>
<gene>
    <name evidence="1" type="primary">rplI</name>
    <name type="ordered locus">RPB_2461</name>
</gene>
<evidence type="ECO:0000255" key="1">
    <source>
        <dbReference type="HAMAP-Rule" id="MF_00503"/>
    </source>
</evidence>
<evidence type="ECO:0000305" key="2"/>
<name>RL9_RHOP2</name>
<dbReference type="EMBL" id="CP000250">
    <property type="protein sequence ID" value="ABD07166.1"/>
    <property type="molecule type" value="Genomic_DNA"/>
</dbReference>
<dbReference type="RefSeq" id="WP_011441351.1">
    <property type="nucleotide sequence ID" value="NC_007778.1"/>
</dbReference>
<dbReference type="SMR" id="Q2IX94"/>
<dbReference type="STRING" id="316058.RPB_2461"/>
<dbReference type="KEGG" id="rpb:RPB_2461"/>
<dbReference type="eggNOG" id="COG0359">
    <property type="taxonomic scope" value="Bacteria"/>
</dbReference>
<dbReference type="HOGENOM" id="CLU_078938_1_0_5"/>
<dbReference type="OrthoDB" id="9788336at2"/>
<dbReference type="Proteomes" id="UP000008809">
    <property type="component" value="Chromosome"/>
</dbReference>
<dbReference type="GO" id="GO:1990904">
    <property type="term" value="C:ribonucleoprotein complex"/>
    <property type="evidence" value="ECO:0007669"/>
    <property type="project" value="UniProtKB-KW"/>
</dbReference>
<dbReference type="GO" id="GO:0005840">
    <property type="term" value="C:ribosome"/>
    <property type="evidence" value="ECO:0007669"/>
    <property type="project" value="UniProtKB-KW"/>
</dbReference>
<dbReference type="GO" id="GO:0019843">
    <property type="term" value="F:rRNA binding"/>
    <property type="evidence" value="ECO:0007669"/>
    <property type="project" value="UniProtKB-UniRule"/>
</dbReference>
<dbReference type="GO" id="GO:0003735">
    <property type="term" value="F:structural constituent of ribosome"/>
    <property type="evidence" value="ECO:0007669"/>
    <property type="project" value="InterPro"/>
</dbReference>
<dbReference type="GO" id="GO:0006412">
    <property type="term" value="P:translation"/>
    <property type="evidence" value="ECO:0007669"/>
    <property type="project" value="UniProtKB-UniRule"/>
</dbReference>
<dbReference type="Gene3D" id="3.10.430.100">
    <property type="entry name" value="Ribosomal protein L9, C-terminal domain"/>
    <property type="match status" value="1"/>
</dbReference>
<dbReference type="Gene3D" id="3.40.5.10">
    <property type="entry name" value="Ribosomal protein L9, N-terminal domain"/>
    <property type="match status" value="1"/>
</dbReference>
<dbReference type="HAMAP" id="MF_00503">
    <property type="entry name" value="Ribosomal_bL9"/>
    <property type="match status" value="1"/>
</dbReference>
<dbReference type="InterPro" id="IPR000244">
    <property type="entry name" value="Ribosomal_bL9"/>
</dbReference>
<dbReference type="InterPro" id="IPR009027">
    <property type="entry name" value="Ribosomal_bL9/RNase_H1_N"/>
</dbReference>
<dbReference type="InterPro" id="IPR020594">
    <property type="entry name" value="Ribosomal_bL9_bac/chp"/>
</dbReference>
<dbReference type="InterPro" id="IPR020069">
    <property type="entry name" value="Ribosomal_bL9_C"/>
</dbReference>
<dbReference type="InterPro" id="IPR036791">
    <property type="entry name" value="Ribosomal_bL9_C_sf"/>
</dbReference>
<dbReference type="InterPro" id="IPR020070">
    <property type="entry name" value="Ribosomal_bL9_N"/>
</dbReference>
<dbReference type="InterPro" id="IPR036935">
    <property type="entry name" value="Ribosomal_bL9_N_sf"/>
</dbReference>
<dbReference type="NCBIfam" id="TIGR00158">
    <property type="entry name" value="L9"/>
    <property type="match status" value="1"/>
</dbReference>
<dbReference type="PANTHER" id="PTHR21368">
    <property type="entry name" value="50S RIBOSOMAL PROTEIN L9"/>
    <property type="match status" value="1"/>
</dbReference>
<dbReference type="Pfam" id="PF03948">
    <property type="entry name" value="Ribosomal_L9_C"/>
    <property type="match status" value="1"/>
</dbReference>
<dbReference type="Pfam" id="PF01281">
    <property type="entry name" value="Ribosomal_L9_N"/>
    <property type="match status" value="1"/>
</dbReference>
<dbReference type="SUPFAM" id="SSF55658">
    <property type="entry name" value="L9 N-domain-like"/>
    <property type="match status" value="1"/>
</dbReference>
<dbReference type="SUPFAM" id="SSF55653">
    <property type="entry name" value="Ribosomal protein L9 C-domain"/>
    <property type="match status" value="1"/>
</dbReference>
<dbReference type="PROSITE" id="PS00651">
    <property type="entry name" value="RIBOSOMAL_L9"/>
    <property type="match status" value="1"/>
</dbReference>
<proteinExistence type="inferred from homology"/>
<sequence>MEVILLERVAKLGQMGELVRVKDGYARNFLLPRGKALRATAANRDKYEHMKADLEARNIAAKAEAAKVAEKIDGHNVIVIRQASETGQLFGSVSVRDIVTSFEAEGVMISRSQILLDAPIKTIGKHAIEVAVHPEVEVGVSVTVARSAEEAERINRGEDISTRREDQDAAAEAIAAAGEFFDPDAVQDDEEQPVEQ</sequence>